<name>3L22_HYDHA</name>
<evidence type="ECO:0000250" key="1"/>
<evidence type="ECO:0000250" key="2">
    <source>
        <dbReference type="UniProtKB" id="P60615"/>
    </source>
</evidence>
<evidence type="ECO:0000255" key="3"/>
<evidence type="ECO:0000305" key="4"/>
<proteinExistence type="inferred from homology"/>
<sequence>MKILLLTLVVVTIVCLDLAYTRTCYRTHPYKPETCPPGQNLCYKKSWCDAFCSSRGKVIELGCTAKCPTVKHGKDINCCATDNCNTVANWKSR</sequence>
<dbReference type="EMBL" id="EF405871">
    <property type="protein sequence ID" value="ABN54806.1"/>
    <property type="molecule type" value="mRNA"/>
</dbReference>
<dbReference type="SMR" id="A3FM53"/>
<dbReference type="GO" id="GO:0005576">
    <property type="term" value="C:extracellular region"/>
    <property type="evidence" value="ECO:0007669"/>
    <property type="project" value="UniProtKB-SubCell"/>
</dbReference>
<dbReference type="GO" id="GO:0030550">
    <property type="term" value="F:acetylcholine receptor inhibitor activity"/>
    <property type="evidence" value="ECO:0007669"/>
    <property type="project" value="UniProtKB-KW"/>
</dbReference>
<dbReference type="GO" id="GO:0099106">
    <property type="term" value="F:ion channel regulator activity"/>
    <property type="evidence" value="ECO:0007669"/>
    <property type="project" value="UniProtKB-KW"/>
</dbReference>
<dbReference type="GO" id="GO:0090729">
    <property type="term" value="F:toxin activity"/>
    <property type="evidence" value="ECO:0007669"/>
    <property type="project" value="UniProtKB-KW"/>
</dbReference>
<dbReference type="CDD" id="cd00206">
    <property type="entry name" value="TFP_snake_toxin"/>
    <property type="match status" value="1"/>
</dbReference>
<dbReference type="Gene3D" id="2.10.60.10">
    <property type="entry name" value="CD59"/>
    <property type="match status" value="1"/>
</dbReference>
<dbReference type="InterPro" id="IPR003571">
    <property type="entry name" value="Snake_3FTx"/>
</dbReference>
<dbReference type="InterPro" id="IPR045860">
    <property type="entry name" value="Snake_toxin-like_sf"/>
</dbReference>
<dbReference type="InterPro" id="IPR018354">
    <property type="entry name" value="Snake_toxin_con_site"/>
</dbReference>
<dbReference type="InterPro" id="IPR054131">
    <property type="entry name" value="Toxin_cobra-type"/>
</dbReference>
<dbReference type="Pfam" id="PF21947">
    <property type="entry name" value="Toxin_cobra-type"/>
    <property type="match status" value="1"/>
</dbReference>
<dbReference type="SUPFAM" id="SSF57302">
    <property type="entry name" value="Snake toxin-like"/>
    <property type="match status" value="1"/>
</dbReference>
<dbReference type="PROSITE" id="PS00272">
    <property type="entry name" value="SNAKE_TOXIN"/>
    <property type="match status" value="1"/>
</dbReference>
<organism>
    <name type="scientific">Hydrophis hardwickii</name>
    <name type="common">Hardwick's spine-bellied seasnake</name>
    <name type="synonym">Lapemis hardwickii</name>
    <dbReference type="NCBI Taxonomy" id="8781"/>
    <lineage>
        <taxon>Eukaryota</taxon>
        <taxon>Metazoa</taxon>
        <taxon>Chordata</taxon>
        <taxon>Craniata</taxon>
        <taxon>Vertebrata</taxon>
        <taxon>Euteleostomi</taxon>
        <taxon>Lepidosauria</taxon>
        <taxon>Squamata</taxon>
        <taxon>Bifurcata</taxon>
        <taxon>Unidentata</taxon>
        <taxon>Episquamata</taxon>
        <taxon>Toxicofera</taxon>
        <taxon>Serpentes</taxon>
        <taxon>Colubroidea</taxon>
        <taxon>Elapidae</taxon>
        <taxon>Hydrophiinae</taxon>
        <taxon>Hydrophis</taxon>
    </lineage>
</organism>
<comment type="function">
    <text evidence="2">Binds with high affinity to muscular (alpha-1/CHRNA1) and neuronal (alpha-7/CHRNA7) nicotinic acetylcholine receptor (nAChR) and inhibits acetylcholine from binding to the receptor, thereby impairing neuromuscular and neuronal transmission.</text>
</comment>
<comment type="subcellular location">
    <subcellularLocation>
        <location evidence="1">Secreted</location>
    </subcellularLocation>
</comment>
<comment type="tissue specificity">
    <text evidence="4">Expressed by the venom gland.</text>
</comment>
<comment type="similarity">
    <text evidence="4">Belongs to the three-finger toxin family. Long-chain subfamily. Type II alpha-neurotoxin sub-subfamily.</text>
</comment>
<feature type="signal peptide" evidence="3">
    <location>
        <begin position="1"/>
        <end position="21"/>
    </location>
</feature>
<feature type="chain" id="PRO_5000225732" description="Long neurotoxin 2">
    <location>
        <begin position="22"/>
        <end position="93"/>
    </location>
</feature>
<feature type="disulfide bond" evidence="1">
    <location>
        <begin position="24"/>
        <end position="42"/>
    </location>
</feature>
<feature type="disulfide bond" evidence="1">
    <location>
        <begin position="35"/>
        <end position="63"/>
    </location>
</feature>
<feature type="disulfide bond" evidence="1">
    <location>
        <begin position="48"/>
        <end position="52"/>
    </location>
</feature>
<feature type="disulfide bond" evidence="1">
    <location>
        <begin position="67"/>
        <end position="78"/>
    </location>
</feature>
<feature type="disulfide bond" evidence="1">
    <location>
        <begin position="79"/>
        <end position="84"/>
    </location>
</feature>
<protein>
    <recommendedName>
        <fullName>Long neurotoxin 2</fullName>
    </recommendedName>
</protein>
<reference key="1">
    <citation type="submission" date="2007-01" db="EMBL/GenBank/DDBJ databases">
        <title>The study of the neurotoxins in sea snake using cDNA phage display technology.</title>
        <authorList>
            <person name="Tan T."/>
            <person name="Bi Q."/>
            <person name="Xiang X."/>
            <person name="Zhu S."/>
        </authorList>
    </citation>
    <scope>NUCLEOTIDE SEQUENCE [MRNA]</scope>
    <source>
        <tissue>Venom gland</tissue>
    </source>
</reference>
<keyword id="KW-0008">Acetylcholine receptor inhibiting toxin</keyword>
<keyword id="KW-1015">Disulfide bond</keyword>
<keyword id="KW-0872">Ion channel impairing toxin</keyword>
<keyword id="KW-0528">Neurotoxin</keyword>
<keyword id="KW-0629">Postsynaptic neurotoxin</keyword>
<keyword id="KW-0964">Secreted</keyword>
<keyword id="KW-0732">Signal</keyword>
<keyword id="KW-0800">Toxin</keyword>
<accession>A3FM53</accession>